<evidence type="ECO:0000250" key="1"/>
<evidence type="ECO:0000255" key="2"/>
<evidence type="ECO:0000256" key="3">
    <source>
        <dbReference type="SAM" id="MobiDB-lite"/>
    </source>
</evidence>
<evidence type="ECO:0000269" key="4">
    <source>
    </source>
</evidence>
<evidence type="ECO:0000305" key="5"/>
<reference key="1">
    <citation type="submission" date="2004-07" db="EMBL/GenBank/DDBJ databases">
        <title>p40BBP, BINP-binding protein.</title>
        <authorList>
            <person name="Hama A."/>
            <person name="Honda H."/>
        </authorList>
    </citation>
    <scope>NUCLEOTIDE SEQUENCE [MRNA]</scope>
</reference>
<reference key="2">
    <citation type="journal article" date="2007" name="Oncogene">
        <title>Normal cellular senescence and cancer susceptibility in mice genetically deficient in Ras-induced senescence-1 (Ris1).</title>
        <authorList>
            <person name="Nieto M."/>
            <person name="Barradas M."/>
            <person name="Criado L.M."/>
            <person name="Flores J.M."/>
            <person name="Serrano M."/>
            <person name="Llano E."/>
        </authorList>
    </citation>
    <scope>TISSUE SPECIFICITY</scope>
    <scope>DEVELOPMENTAL STAGE</scope>
</reference>
<sequence length="286" mass="29145">MLPLLAALLAAACQLPPAHGGATDAPGLAGTPPNASANASFTNEHSTPRLLASAASAPPERSGPEEAPAAPCNISVQRQMLSSLLVRWGRPRGLQCDLLLFSTNAHGRAFFAAAFHRVGPPLLIEHLGLAAGGAQQDLRLCVGCGWVRGRLRAPAGAPTALPAYPAAEPGPLWLQGEPRHFCCLDFSLEELQGEPGWRLNRKPIESTLVACFMTLVIVVWSVAALIWPVPIIAGFLPNGMEQRRTTAGAPAAAPAAVPAGTTAAAAAAAAAAAAAAAAVTSGVAPK</sequence>
<comment type="function">
    <text evidence="1">Receptor for brain injury-derived neurotrophic peptide (BINP), a synthetic 13-mer peptide.</text>
</comment>
<comment type="interaction">
    <interactant intactId="EBI-645317">
        <id>Q6F5E0</id>
    </interactant>
    <interactant intactId="EBI-644224">
        <id>P09055</id>
        <label>Itgb1</label>
    </interactant>
    <organismsDiffer>false</organismsDiffer>
    <experiments>3</experiments>
</comment>
<comment type="subcellular location">
    <subcellularLocation>
        <location evidence="5">Membrane</location>
        <topology evidence="5">Multi-pass membrane protein</topology>
    </subcellularLocation>
</comment>
<comment type="tissue specificity">
    <text evidence="4">Ubiquitously expressed. Brain is the major site of expression.</text>
</comment>
<comment type="developmental stage">
    <text evidence="4">Ubiquitously expressed at day 9.5 dpc, with high levels in the endoderm, down-regulated at day 10.5 dpc, and expressed again at day 11.5 dpc, with high levels in the brain and neural tube. Then levels increase steadily until day 14.5 dpc.</text>
</comment>
<comment type="PTM">
    <text evidence="1">N-glycosylated.</text>
</comment>
<comment type="similarity">
    <text evidence="5">Belongs to the TMEM158 family.</text>
</comment>
<dbReference type="EMBL" id="AB114272">
    <property type="protein sequence ID" value="BAD27475.1"/>
    <property type="molecule type" value="mRNA"/>
</dbReference>
<dbReference type="CCDS" id="CCDS23658.1"/>
<dbReference type="SMR" id="Q6F5E0"/>
<dbReference type="FunCoup" id="Q6F5E0">
    <property type="interactions" value="2"/>
</dbReference>
<dbReference type="IntAct" id="Q6F5E0">
    <property type="interactions" value="1"/>
</dbReference>
<dbReference type="STRING" id="10090.ENSMUSP00000069161"/>
<dbReference type="GlyConnect" id="2790">
    <property type="glycosylation" value="1 N-Linked glycan (1 site)"/>
</dbReference>
<dbReference type="GlyCosmos" id="Q6F5E0">
    <property type="glycosylation" value="1 site, 1 glycan"/>
</dbReference>
<dbReference type="GlyGen" id="Q6F5E0">
    <property type="glycosylation" value="1 site, 3 N-linked glycans (1 site)"/>
</dbReference>
<dbReference type="iPTMnet" id="Q6F5E0"/>
<dbReference type="PhosphoSitePlus" id="Q6F5E0"/>
<dbReference type="PaxDb" id="10090-ENSMUSP00000069161"/>
<dbReference type="ProteomicsDB" id="259463"/>
<dbReference type="AGR" id="MGI:1919559"/>
<dbReference type="MGI" id="MGI:1919559">
    <property type="gene designation" value="Tmem158"/>
</dbReference>
<dbReference type="eggNOG" id="ENOG502RYJ7">
    <property type="taxonomic scope" value="Eukaryota"/>
</dbReference>
<dbReference type="InParanoid" id="Q6F5E0"/>
<dbReference type="PhylomeDB" id="Q6F5E0"/>
<dbReference type="ChiTaRS" id="Mrvi1">
    <property type="organism name" value="mouse"/>
</dbReference>
<dbReference type="PRO" id="PR:Q6F5E0"/>
<dbReference type="Proteomes" id="UP000000589">
    <property type="component" value="Unplaced"/>
</dbReference>
<dbReference type="RNAct" id="Q6F5E0">
    <property type="molecule type" value="protein"/>
</dbReference>
<dbReference type="GO" id="GO:0016020">
    <property type="term" value="C:membrane"/>
    <property type="evidence" value="ECO:0007669"/>
    <property type="project" value="UniProtKB-SubCell"/>
</dbReference>
<dbReference type="InterPro" id="IPR038962">
    <property type="entry name" value="TMEM158"/>
</dbReference>
<dbReference type="PANTHER" id="PTHR38324">
    <property type="entry name" value="TRANSMEMBRANE PROTEIN 158"/>
    <property type="match status" value="1"/>
</dbReference>
<dbReference type="PANTHER" id="PTHR38324:SF1">
    <property type="entry name" value="TRANSMEMBRANE PROTEIN 158"/>
    <property type="match status" value="1"/>
</dbReference>
<accession>Q6F5E0</accession>
<organism>
    <name type="scientific">Mus musculus</name>
    <name type="common">Mouse</name>
    <dbReference type="NCBI Taxonomy" id="10090"/>
    <lineage>
        <taxon>Eukaryota</taxon>
        <taxon>Metazoa</taxon>
        <taxon>Chordata</taxon>
        <taxon>Craniata</taxon>
        <taxon>Vertebrata</taxon>
        <taxon>Euteleostomi</taxon>
        <taxon>Mammalia</taxon>
        <taxon>Eutheria</taxon>
        <taxon>Euarchontoglires</taxon>
        <taxon>Glires</taxon>
        <taxon>Rodentia</taxon>
        <taxon>Myomorpha</taxon>
        <taxon>Muroidea</taxon>
        <taxon>Muridae</taxon>
        <taxon>Murinae</taxon>
        <taxon>Mus</taxon>
        <taxon>Mus</taxon>
    </lineage>
</organism>
<keyword id="KW-0325">Glycoprotein</keyword>
<keyword id="KW-0472">Membrane</keyword>
<keyword id="KW-1185">Reference proteome</keyword>
<keyword id="KW-0732">Signal</keyword>
<keyword id="KW-0812">Transmembrane</keyword>
<keyword id="KW-1133">Transmembrane helix</keyword>
<feature type="signal peptide" evidence="2">
    <location>
        <begin position="1"/>
        <end position="20"/>
    </location>
</feature>
<feature type="chain" id="PRO_0000285129" description="Transmembrane protein 158">
    <location>
        <begin position="21"/>
        <end position="286"/>
    </location>
</feature>
<feature type="transmembrane region" description="Helical" evidence="2">
    <location>
        <begin position="215"/>
        <end position="235"/>
    </location>
</feature>
<feature type="transmembrane region" description="Helical" evidence="2">
    <location>
        <begin position="263"/>
        <end position="283"/>
    </location>
</feature>
<feature type="region of interest" description="Disordered" evidence="3">
    <location>
        <begin position="20"/>
        <end position="43"/>
    </location>
</feature>
<feature type="region of interest" description="Disordered" evidence="3">
    <location>
        <begin position="52"/>
        <end position="71"/>
    </location>
</feature>
<feature type="compositionally biased region" description="Polar residues" evidence="3">
    <location>
        <begin position="33"/>
        <end position="43"/>
    </location>
</feature>
<feature type="glycosylation site" description="N-linked (GlcNAc...) asparagine" evidence="2">
    <location>
        <position position="73"/>
    </location>
</feature>
<name>TM158_MOUSE</name>
<proteinExistence type="evidence at protein level"/>
<gene>
    <name type="primary">Tmem158</name>
    <name type="synonym">Mbbp</name>
    <name type="synonym">Ris1</name>
</gene>
<protein>
    <recommendedName>
        <fullName>Transmembrane protein 158</fullName>
    </recommendedName>
    <alternativeName>
        <fullName>40 kDa BINP-binding protein</fullName>
        <shortName>p40BBP</shortName>
    </alternativeName>
    <alternativeName>
        <fullName>Ras-induced senescence protein 1</fullName>
    </alternativeName>
</protein>